<proteinExistence type="inferred from homology"/>
<keyword id="KW-0067">ATP-binding</keyword>
<keyword id="KW-0436">Ligase</keyword>
<keyword id="KW-0547">Nucleotide-binding</keyword>
<keyword id="KW-0648">Protein biosynthesis</keyword>
<keyword id="KW-1185">Reference proteome</keyword>
<protein>
    <recommendedName>
        <fullName evidence="1">Glutamyl-tRNA(Gln) amidotransferase subunit A</fullName>
        <shortName evidence="1">Glu-ADT subunit A</shortName>
        <ecNumber evidence="1">6.3.5.7</ecNumber>
    </recommendedName>
</protein>
<organism>
    <name type="scientific">Agrobacterium fabrum (strain C58 / ATCC 33970)</name>
    <name type="common">Agrobacterium tumefaciens (strain C58)</name>
    <dbReference type="NCBI Taxonomy" id="176299"/>
    <lineage>
        <taxon>Bacteria</taxon>
        <taxon>Pseudomonadati</taxon>
        <taxon>Pseudomonadota</taxon>
        <taxon>Alphaproteobacteria</taxon>
        <taxon>Hyphomicrobiales</taxon>
        <taxon>Rhizobiaceae</taxon>
        <taxon>Rhizobium/Agrobacterium group</taxon>
        <taxon>Agrobacterium</taxon>
        <taxon>Agrobacterium tumefaciens complex</taxon>
    </lineage>
</organism>
<accession>Q8UFS8</accession>
<accession>Q8U5B9</accession>
<gene>
    <name evidence="1" type="primary">gatA</name>
    <name type="ordered locus">Atu1319</name>
    <name type="ORF">AGR_C_2430</name>
</gene>
<evidence type="ECO:0000255" key="1">
    <source>
        <dbReference type="HAMAP-Rule" id="MF_00120"/>
    </source>
</evidence>
<name>GATA_AGRFC</name>
<comment type="function">
    <text evidence="1">Allows the formation of correctly charged Gln-tRNA(Gln) through the transamidation of misacylated Glu-tRNA(Gln) in organisms which lack glutaminyl-tRNA synthetase. The reaction takes place in the presence of glutamine and ATP through an activated gamma-phospho-Glu-tRNA(Gln).</text>
</comment>
<comment type="catalytic activity">
    <reaction evidence="1">
        <text>L-glutamyl-tRNA(Gln) + L-glutamine + ATP + H2O = L-glutaminyl-tRNA(Gln) + L-glutamate + ADP + phosphate + H(+)</text>
        <dbReference type="Rhea" id="RHEA:17521"/>
        <dbReference type="Rhea" id="RHEA-COMP:9681"/>
        <dbReference type="Rhea" id="RHEA-COMP:9684"/>
        <dbReference type="ChEBI" id="CHEBI:15377"/>
        <dbReference type="ChEBI" id="CHEBI:15378"/>
        <dbReference type="ChEBI" id="CHEBI:29985"/>
        <dbReference type="ChEBI" id="CHEBI:30616"/>
        <dbReference type="ChEBI" id="CHEBI:43474"/>
        <dbReference type="ChEBI" id="CHEBI:58359"/>
        <dbReference type="ChEBI" id="CHEBI:78520"/>
        <dbReference type="ChEBI" id="CHEBI:78521"/>
        <dbReference type="ChEBI" id="CHEBI:456216"/>
        <dbReference type="EC" id="6.3.5.7"/>
    </reaction>
</comment>
<comment type="subunit">
    <text evidence="1">Heterotrimer of A, B and C subunits.</text>
</comment>
<comment type="similarity">
    <text evidence="1">Belongs to the amidase family. GatA subfamily.</text>
</comment>
<dbReference type="EC" id="6.3.5.7" evidence="1"/>
<dbReference type="EMBL" id="AE007869">
    <property type="protein sequence ID" value="AAK87110.2"/>
    <property type="molecule type" value="Genomic_DNA"/>
</dbReference>
<dbReference type="PIR" id="AG2738">
    <property type="entry name" value="AG2738"/>
</dbReference>
<dbReference type="PIR" id="E97519">
    <property type="entry name" value="E97519"/>
</dbReference>
<dbReference type="RefSeq" id="NP_354325.2">
    <property type="nucleotide sequence ID" value="NC_003062.2"/>
</dbReference>
<dbReference type="RefSeq" id="WP_010971541.1">
    <property type="nucleotide sequence ID" value="NC_003062.2"/>
</dbReference>
<dbReference type="SMR" id="Q8UFS8"/>
<dbReference type="STRING" id="176299.Atu1319"/>
<dbReference type="EnsemblBacteria" id="AAK87110">
    <property type="protein sequence ID" value="AAK87110"/>
    <property type="gene ID" value="Atu1319"/>
</dbReference>
<dbReference type="GeneID" id="1133357"/>
<dbReference type="KEGG" id="atu:Atu1319"/>
<dbReference type="PATRIC" id="fig|176299.10.peg.1336"/>
<dbReference type="eggNOG" id="COG0154">
    <property type="taxonomic scope" value="Bacteria"/>
</dbReference>
<dbReference type="HOGENOM" id="CLU_009600_0_3_5"/>
<dbReference type="OrthoDB" id="9811471at2"/>
<dbReference type="PhylomeDB" id="Q8UFS8"/>
<dbReference type="BioCyc" id="AGRO:ATU1319-MONOMER"/>
<dbReference type="Proteomes" id="UP000000813">
    <property type="component" value="Chromosome circular"/>
</dbReference>
<dbReference type="GO" id="GO:0030956">
    <property type="term" value="C:glutamyl-tRNA(Gln) amidotransferase complex"/>
    <property type="evidence" value="ECO:0007669"/>
    <property type="project" value="InterPro"/>
</dbReference>
<dbReference type="GO" id="GO:0005524">
    <property type="term" value="F:ATP binding"/>
    <property type="evidence" value="ECO:0007669"/>
    <property type="project" value="UniProtKB-KW"/>
</dbReference>
<dbReference type="GO" id="GO:0050567">
    <property type="term" value="F:glutaminyl-tRNA synthase (glutamine-hydrolyzing) activity"/>
    <property type="evidence" value="ECO:0007669"/>
    <property type="project" value="UniProtKB-UniRule"/>
</dbReference>
<dbReference type="GO" id="GO:0006412">
    <property type="term" value="P:translation"/>
    <property type="evidence" value="ECO:0007669"/>
    <property type="project" value="UniProtKB-UniRule"/>
</dbReference>
<dbReference type="Gene3D" id="3.90.1300.10">
    <property type="entry name" value="Amidase signature (AS) domain"/>
    <property type="match status" value="1"/>
</dbReference>
<dbReference type="HAMAP" id="MF_00120">
    <property type="entry name" value="GatA"/>
    <property type="match status" value="1"/>
</dbReference>
<dbReference type="InterPro" id="IPR000120">
    <property type="entry name" value="Amidase"/>
</dbReference>
<dbReference type="InterPro" id="IPR020556">
    <property type="entry name" value="Amidase_CS"/>
</dbReference>
<dbReference type="InterPro" id="IPR023631">
    <property type="entry name" value="Amidase_dom"/>
</dbReference>
<dbReference type="InterPro" id="IPR036928">
    <property type="entry name" value="AS_sf"/>
</dbReference>
<dbReference type="InterPro" id="IPR004412">
    <property type="entry name" value="GatA"/>
</dbReference>
<dbReference type="NCBIfam" id="TIGR00132">
    <property type="entry name" value="gatA"/>
    <property type="match status" value="1"/>
</dbReference>
<dbReference type="PANTHER" id="PTHR11895:SF151">
    <property type="entry name" value="GLUTAMYL-TRNA(GLN) AMIDOTRANSFERASE SUBUNIT A"/>
    <property type="match status" value="1"/>
</dbReference>
<dbReference type="PANTHER" id="PTHR11895">
    <property type="entry name" value="TRANSAMIDASE"/>
    <property type="match status" value="1"/>
</dbReference>
<dbReference type="Pfam" id="PF01425">
    <property type="entry name" value="Amidase"/>
    <property type="match status" value="1"/>
</dbReference>
<dbReference type="SUPFAM" id="SSF75304">
    <property type="entry name" value="Amidase signature (AS) enzymes"/>
    <property type="match status" value="1"/>
</dbReference>
<dbReference type="PROSITE" id="PS00571">
    <property type="entry name" value="AMIDASES"/>
    <property type="match status" value="1"/>
</dbReference>
<feature type="chain" id="PRO_0000105131" description="Glutamyl-tRNA(Gln) amidotransferase subunit A">
    <location>
        <begin position="1"/>
        <end position="493"/>
    </location>
</feature>
<feature type="active site" description="Charge relay system" evidence="1">
    <location>
        <position position="79"/>
    </location>
</feature>
<feature type="active site" description="Charge relay system" evidence="1">
    <location>
        <position position="159"/>
    </location>
</feature>
<feature type="active site" description="Acyl-ester intermediate" evidence="1">
    <location>
        <position position="183"/>
    </location>
</feature>
<sequence length="493" mass="52768">MTDLTSLTIAEAREKLKAKDFSALELTDAYLSAIDAANGALNAYVALTPEKARDMAKASDERIASGSAGELEGVPLGVKDLFATRDVHTQACSHVLDGFKPKYESTVTQNLWDQGAVMLGKLNMDEFAMGSSNESSWYGPVINPWRANGSEQKLVPGGSSGGSAAAVAAHLCAGATATDTGGSIRQPAAFTGTVGIKPTYGRCSRFGIVAYASSLDQAGPIARDVRDAAILLKTMASVDAKDTTSVDLPVPDYEKAIGQSLKGLKIGIPREYRVDGMPEEIEKLWAKGVEWLRDAGAEVVDISLPHTKYALPAYYIVAPAEASSNLARYDGVRYGLRVDGKDIADMYEKSRAAGFGKEVQRRIMVGTYVLSAGYYDAYYLKAQKVRTLIKRDFENVFHEGVDAILAPITPSSAFAVGDEELASDPVKMYLQDVFTITVNMAGLPGLSVPAGLDGKGLPLGLQLIGKPFEEETLFKTAHAIEQAAGKFTPAKWW</sequence>
<reference key="1">
    <citation type="journal article" date="2001" name="Science">
        <title>The genome of the natural genetic engineer Agrobacterium tumefaciens C58.</title>
        <authorList>
            <person name="Wood D.W."/>
            <person name="Setubal J.C."/>
            <person name="Kaul R."/>
            <person name="Monks D.E."/>
            <person name="Kitajima J.P."/>
            <person name="Okura V.K."/>
            <person name="Zhou Y."/>
            <person name="Chen L."/>
            <person name="Wood G.E."/>
            <person name="Almeida N.F. Jr."/>
            <person name="Woo L."/>
            <person name="Chen Y."/>
            <person name="Paulsen I.T."/>
            <person name="Eisen J.A."/>
            <person name="Karp P.D."/>
            <person name="Bovee D. Sr."/>
            <person name="Chapman P."/>
            <person name="Clendenning J."/>
            <person name="Deatherage G."/>
            <person name="Gillet W."/>
            <person name="Grant C."/>
            <person name="Kutyavin T."/>
            <person name="Levy R."/>
            <person name="Li M.-J."/>
            <person name="McClelland E."/>
            <person name="Palmieri A."/>
            <person name="Raymond C."/>
            <person name="Rouse G."/>
            <person name="Saenphimmachak C."/>
            <person name="Wu Z."/>
            <person name="Romero P."/>
            <person name="Gordon D."/>
            <person name="Zhang S."/>
            <person name="Yoo H."/>
            <person name="Tao Y."/>
            <person name="Biddle P."/>
            <person name="Jung M."/>
            <person name="Krespan W."/>
            <person name="Perry M."/>
            <person name="Gordon-Kamm B."/>
            <person name="Liao L."/>
            <person name="Kim S."/>
            <person name="Hendrick C."/>
            <person name="Zhao Z.-Y."/>
            <person name="Dolan M."/>
            <person name="Chumley F."/>
            <person name="Tingey S.V."/>
            <person name="Tomb J.-F."/>
            <person name="Gordon M.P."/>
            <person name="Olson M.V."/>
            <person name="Nester E.W."/>
        </authorList>
    </citation>
    <scope>NUCLEOTIDE SEQUENCE [LARGE SCALE GENOMIC DNA]</scope>
    <source>
        <strain>C58 / ATCC 33970</strain>
    </source>
</reference>
<reference key="2">
    <citation type="journal article" date="2001" name="Science">
        <title>Genome sequence of the plant pathogen and biotechnology agent Agrobacterium tumefaciens C58.</title>
        <authorList>
            <person name="Goodner B."/>
            <person name="Hinkle G."/>
            <person name="Gattung S."/>
            <person name="Miller N."/>
            <person name="Blanchard M."/>
            <person name="Qurollo B."/>
            <person name="Goldman B.S."/>
            <person name="Cao Y."/>
            <person name="Askenazi M."/>
            <person name="Halling C."/>
            <person name="Mullin L."/>
            <person name="Houmiel K."/>
            <person name="Gordon J."/>
            <person name="Vaudin M."/>
            <person name="Iartchouk O."/>
            <person name="Epp A."/>
            <person name="Liu F."/>
            <person name="Wollam C."/>
            <person name="Allinger M."/>
            <person name="Doughty D."/>
            <person name="Scott C."/>
            <person name="Lappas C."/>
            <person name="Markelz B."/>
            <person name="Flanagan C."/>
            <person name="Crowell C."/>
            <person name="Gurson J."/>
            <person name="Lomo C."/>
            <person name="Sear C."/>
            <person name="Strub G."/>
            <person name="Cielo C."/>
            <person name="Slater S."/>
        </authorList>
    </citation>
    <scope>NUCLEOTIDE SEQUENCE [LARGE SCALE GENOMIC DNA]</scope>
    <source>
        <strain>C58 / ATCC 33970</strain>
    </source>
</reference>